<comment type="function">
    <text evidence="1">Required for disulfide bond formation in some periplasmic proteins. Acts by oxidizing the DsbA protein.</text>
</comment>
<comment type="subcellular location">
    <subcellularLocation>
        <location evidence="1">Cell inner membrane</location>
        <topology evidence="1">Multi-pass membrane protein</topology>
    </subcellularLocation>
</comment>
<comment type="similarity">
    <text evidence="1">Belongs to the DsbB family.</text>
</comment>
<gene>
    <name evidence="1" type="primary">dsbB</name>
    <name type="ordered locus">Mlg_2859</name>
</gene>
<evidence type="ECO:0000255" key="1">
    <source>
        <dbReference type="HAMAP-Rule" id="MF_00286"/>
    </source>
</evidence>
<dbReference type="EMBL" id="CP000453">
    <property type="protein sequence ID" value="ABI58199.1"/>
    <property type="molecule type" value="Genomic_DNA"/>
</dbReference>
<dbReference type="RefSeq" id="WP_011630592.1">
    <property type="nucleotide sequence ID" value="NC_008340.1"/>
</dbReference>
<dbReference type="KEGG" id="aeh:Mlg_2859"/>
<dbReference type="eggNOG" id="COG1495">
    <property type="taxonomic scope" value="Bacteria"/>
</dbReference>
<dbReference type="HOGENOM" id="CLU_098660_1_0_6"/>
<dbReference type="OrthoDB" id="3711263at2"/>
<dbReference type="Proteomes" id="UP000001962">
    <property type="component" value="Chromosome"/>
</dbReference>
<dbReference type="GO" id="GO:0005886">
    <property type="term" value="C:plasma membrane"/>
    <property type="evidence" value="ECO:0007669"/>
    <property type="project" value="UniProtKB-SubCell"/>
</dbReference>
<dbReference type="GO" id="GO:0009055">
    <property type="term" value="F:electron transfer activity"/>
    <property type="evidence" value="ECO:0007669"/>
    <property type="project" value="UniProtKB-UniRule"/>
</dbReference>
<dbReference type="GO" id="GO:0015035">
    <property type="term" value="F:protein-disulfide reductase activity"/>
    <property type="evidence" value="ECO:0007669"/>
    <property type="project" value="UniProtKB-UniRule"/>
</dbReference>
<dbReference type="GO" id="GO:0006457">
    <property type="term" value="P:protein folding"/>
    <property type="evidence" value="ECO:0007669"/>
    <property type="project" value="InterPro"/>
</dbReference>
<dbReference type="Gene3D" id="1.20.1550.10">
    <property type="entry name" value="DsbB-like"/>
    <property type="match status" value="1"/>
</dbReference>
<dbReference type="HAMAP" id="MF_00286">
    <property type="entry name" value="DsbB"/>
    <property type="match status" value="1"/>
</dbReference>
<dbReference type="InterPro" id="IPR003752">
    <property type="entry name" value="DiS_bond_form_DsbB/BdbC"/>
</dbReference>
<dbReference type="InterPro" id="IPR022920">
    <property type="entry name" value="Disulphide_bond_form_DsbB"/>
</dbReference>
<dbReference type="InterPro" id="IPR050183">
    <property type="entry name" value="DsbB"/>
</dbReference>
<dbReference type="InterPro" id="IPR023380">
    <property type="entry name" value="DsbB-like_sf"/>
</dbReference>
<dbReference type="PANTHER" id="PTHR36570">
    <property type="entry name" value="DISULFIDE BOND FORMATION PROTEIN B"/>
    <property type="match status" value="1"/>
</dbReference>
<dbReference type="PANTHER" id="PTHR36570:SF3">
    <property type="entry name" value="DISULFIDE BOND FORMATION PROTEIN B"/>
    <property type="match status" value="1"/>
</dbReference>
<dbReference type="Pfam" id="PF02600">
    <property type="entry name" value="DsbB"/>
    <property type="match status" value="1"/>
</dbReference>
<dbReference type="SUPFAM" id="SSF158442">
    <property type="entry name" value="DsbB-like"/>
    <property type="match status" value="1"/>
</dbReference>
<feature type="chain" id="PRO_0000298337" description="Disulfide bond formation protein B">
    <location>
        <begin position="1"/>
        <end position="162"/>
    </location>
</feature>
<feature type="topological domain" description="Cytoplasmic" evidence="1">
    <location>
        <begin position="1"/>
        <end position="10"/>
    </location>
</feature>
<feature type="transmembrane region" description="Helical" evidence="1">
    <location>
        <begin position="11"/>
        <end position="27"/>
    </location>
</feature>
<feature type="topological domain" description="Periplasmic" evidence="1">
    <location>
        <begin position="28"/>
        <end position="45"/>
    </location>
</feature>
<feature type="transmembrane region" description="Helical" evidence="1">
    <location>
        <begin position="46"/>
        <end position="62"/>
    </location>
</feature>
<feature type="topological domain" description="Cytoplasmic" evidence="1">
    <location>
        <begin position="63"/>
        <end position="68"/>
    </location>
</feature>
<feature type="transmembrane region" description="Helical" evidence="1">
    <location>
        <begin position="69"/>
        <end position="86"/>
    </location>
</feature>
<feature type="topological domain" description="Periplasmic" evidence="1">
    <location>
        <begin position="87"/>
        <end position="140"/>
    </location>
</feature>
<feature type="transmembrane region" description="Helical" evidence="1">
    <location>
        <begin position="141"/>
        <end position="159"/>
    </location>
</feature>
<feature type="topological domain" description="Cytoplasmic" evidence="1">
    <location>
        <begin position="160"/>
        <end position="162"/>
    </location>
</feature>
<feature type="disulfide bond" description="Redox-active" evidence="1">
    <location>
        <begin position="37"/>
        <end position="40"/>
    </location>
</feature>
<feature type="disulfide bond" description="Redox-active" evidence="1">
    <location>
        <begin position="100"/>
        <end position="127"/>
    </location>
</feature>
<reference key="1">
    <citation type="submission" date="2006-08" db="EMBL/GenBank/DDBJ databases">
        <title>Complete sequence of Alkalilimnicola ehrilichei MLHE-1.</title>
        <authorList>
            <person name="Copeland A."/>
            <person name="Lucas S."/>
            <person name="Lapidus A."/>
            <person name="Barry K."/>
            <person name="Detter J.C."/>
            <person name="Glavina del Rio T."/>
            <person name="Hammon N."/>
            <person name="Israni S."/>
            <person name="Dalin E."/>
            <person name="Tice H."/>
            <person name="Pitluck S."/>
            <person name="Sims D."/>
            <person name="Brettin T."/>
            <person name="Bruce D."/>
            <person name="Han C."/>
            <person name="Tapia R."/>
            <person name="Gilna P."/>
            <person name="Schmutz J."/>
            <person name="Larimer F."/>
            <person name="Land M."/>
            <person name="Hauser L."/>
            <person name="Kyrpides N."/>
            <person name="Mikhailova N."/>
            <person name="Oremland R.S."/>
            <person name="Hoeft S.E."/>
            <person name="Switzer-Blum J."/>
            <person name="Kulp T."/>
            <person name="King G."/>
            <person name="Tabita R."/>
            <person name="Witte B."/>
            <person name="Santini J.M."/>
            <person name="Basu P."/>
            <person name="Hollibaugh J.T."/>
            <person name="Xie G."/>
            <person name="Stolz J.F."/>
            <person name="Richardson P."/>
        </authorList>
    </citation>
    <scope>NUCLEOTIDE SEQUENCE [LARGE SCALE GENOMIC DNA]</scope>
    <source>
        <strain>ATCC BAA-1101 / DSM 17681 / MLHE-1</strain>
    </source>
</reference>
<proteinExistence type="inferred from homology"/>
<sequence>MGDWLLRRRGLALLLVLTLLLNLGALGLEYLADMPPCPLCWVQRGVFGLMSLVALVGLVYFPRGWGRWPLAGALGLSALTGVIIALRHLYIQANPDAVSCGMSPEVLAQFLPWWEVLLEILSGTTDCTQVDAVLGVPLPGWTLVGYLALGALGLYAVLARRA</sequence>
<name>DSBB_ALKEH</name>
<organism>
    <name type="scientific">Alkalilimnicola ehrlichii (strain ATCC BAA-1101 / DSM 17681 / MLHE-1)</name>
    <dbReference type="NCBI Taxonomy" id="187272"/>
    <lineage>
        <taxon>Bacteria</taxon>
        <taxon>Pseudomonadati</taxon>
        <taxon>Pseudomonadota</taxon>
        <taxon>Gammaproteobacteria</taxon>
        <taxon>Chromatiales</taxon>
        <taxon>Ectothiorhodospiraceae</taxon>
        <taxon>Alkalilimnicola</taxon>
    </lineage>
</organism>
<keyword id="KW-0997">Cell inner membrane</keyword>
<keyword id="KW-1003">Cell membrane</keyword>
<keyword id="KW-0143">Chaperone</keyword>
<keyword id="KW-1015">Disulfide bond</keyword>
<keyword id="KW-0249">Electron transport</keyword>
<keyword id="KW-0472">Membrane</keyword>
<keyword id="KW-0560">Oxidoreductase</keyword>
<keyword id="KW-0676">Redox-active center</keyword>
<keyword id="KW-1185">Reference proteome</keyword>
<keyword id="KW-0812">Transmembrane</keyword>
<keyword id="KW-1133">Transmembrane helix</keyword>
<keyword id="KW-0813">Transport</keyword>
<protein>
    <recommendedName>
        <fullName evidence="1">Disulfide bond formation protein B</fullName>
    </recommendedName>
    <alternativeName>
        <fullName evidence="1">Disulfide oxidoreductase</fullName>
    </alternativeName>
</protein>
<accession>Q0A4N8</accession>